<protein>
    <recommendedName>
        <fullName evidence="1">Tyrosine--tRNA ligase 1</fullName>
        <ecNumber evidence="1">6.1.1.1</ecNumber>
    </recommendedName>
    <alternativeName>
        <fullName evidence="1">Tyrosyl-tRNA synthetase 1</fullName>
        <shortName evidence="1">TyrRS 1</shortName>
    </alternativeName>
</protein>
<dbReference type="EC" id="6.1.1.1" evidence="1"/>
<dbReference type="EMBL" id="CP000023">
    <property type="protein sequence ID" value="AAV61469.1"/>
    <property type="status" value="ALT_INIT"/>
    <property type="molecule type" value="Genomic_DNA"/>
</dbReference>
<dbReference type="SMR" id="Q5M2F3"/>
<dbReference type="STRING" id="264199.stu1870"/>
<dbReference type="KEGG" id="stl:stu1870"/>
<dbReference type="eggNOG" id="COG0162">
    <property type="taxonomic scope" value="Bacteria"/>
</dbReference>
<dbReference type="HOGENOM" id="CLU_024003_0_3_9"/>
<dbReference type="Proteomes" id="UP000001170">
    <property type="component" value="Chromosome"/>
</dbReference>
<dbReference type="GO" id="GO:0005829">
    <property type="term" value="C:cytosol"/>
    <property type="evidence" value="ECO:0007669"/>
    <property type="project" value="TreeGrafter"/>
</dbReference>
<dbReference type="GO" id="GO:0005524">
    <property type="term" value="F:ATP binding"/>
    <property type="evidence" value="ECO:0007669"/>
    <property type="project" value="UniProtKB-UniRule"/>
</dbReference>
<dbReference type="GO" id="GO:0003723">
    <property type="term" value="F:RNA binding"/>
    <property type="evidence" value="ECO:0007669"/>
    <property type="project" value="UniProtKB-KW"/>
</dbReference>
<dbReference type="GO" id="GO:0004831">
    <property type="term" value="F:tyrosine-tRNA ligase activity"/>
    <property type="evidence" value="ECO:0007669"/>
    <property type="project" value="UniProtKB-UniRule"/>
</dbReference>
<dbReference type="GO" id="GO:0006437">
    <property type="term" value="P:tyrosyl-tRNA aminoacylation"/>
    <property type="evidence" value="ECO:0007669"/>
    <property type="project" value="UniProtKB-UniRule"/>
</dbReference>
<dbReference type="CDD" id="cd00165">
    <property type="entry name" value="S4"/>
    <property type="match status" value="1"/>
</dbReference>
<dbReference type="CDD" id="cd00805">
    <property type="entry name" value="TyrRS_core"/>
    <property type="match status" value="1"/>
</dbReference>
<dbReference type="FunFam" id="1.10.240.10:FF:000001">
    <property type="entry name" value="Tyrosine--tRNA ligase"/>
    <property type="match status" value="1"/>
</dbReference>
<dbReference type="FunFam" id="3.40.50.620:FF:000008">
    <property type="entry name" value="Tyrosine--tRNA ligase"/>
    <property type="match status" value="1"/>
</dbReference>
<dbReference type="Gene3D" id="3.40.50.620">
    <property type="entry name" value="HUPs"/>
    <property type="match status" value="1"/>
</dbReference>
<dbReference type="Gene3D" id="3.10.290.10">
    <property type="entry name" value="RNA-binding S4 domain"/>
    <property type="match status" value="1"/>
</dbReference>
<dbReference type="Gene3D" id="1.10.240.10">
    <property type="entry name" value="Tyrosyl-Transfer RNA Synthetase"/>
    <property type="match status" value="1"/>
</dbReference>
<dbReference type="HAMAP" id="MF_02006">
    <property type="entry name" value="Tyr_tRNA_synth_type1"/>
    <property type="match status" value="1"/>
</dbReference>
<dbReference type="InterPro" id="IPR001412">
    <property type="entry name" value="aa-tRNA-synth_I_CS"/>
</dbReference>
<dbReference type="InterPro" id="IPR002305">
    <property type="entry name" value="aa-tRNA-synth_Ic"/>
</dbReference>
<dbReference type="InterPro" id="IPR014729">
    <property type="entry name" value="Rossmann-like_a/b/a_fold"/>
</dbReference>
<dbReference type="InterPro" id="IPR002942">
    <property type="entry name" value="S4_RNA-bd"/>
</dbReference>
<dbReference type="InterPro" id="IPR036986">
    <property type="entry name" value="S4_RNA-bd_sf"/>
</dbReference>
<dbReference type="InterPro" id="IPR054608">
    <property type="entry name" value="SYY-like_C"/>
</dbReference>
<dbReference type="InterPro" id="IPR002307">
    <property type="entry name" value="Tyr-tRNA-ligase"/>
</dbReference>
<dbReference type="InterPro" id="IPR024088">
    <property type="entry name" value="Tyr-tRNA-ligase_bac-type"/>
</dbReference>
<dbReference type="InterPro" id="IPR024107">
    <property type="entry name" value="Tyr-tRNA-ligase_bac_1"/>
</dbReference>
<dbReference type="NCBIfam" id="TIGR00234">
    <property type="entry name" value="tyrS"/>
    <property type="match status" value="1"/>
</dbReference>
<dbReference type="PANTHER" id="PTHR11766:SF0">
    <property type="entry name" value="TYROSINE--TRNA LIGASE, MITOCHONDRIAL"/>
    <property type="match status" value="1"/>
</dbReference>
<dbReference type="PANTHER" id="PTHR11766">
    <property type="entry name" value="TYROSYL-TRNA SYNTHETASE"/>
    <property type="match status" value="1"/>
</dbReference>
<dbReference type="Pfam" id="PF22421">
    <property type="entry name" value="SYY_C-terminal"/>
    <property type="match status" value="1"/>
</dbReference>
<dbReference type="Pfam" id="PF00579">
    <property type="entry name" value="tRNA-synt_1b"/>
    <property type="match status" value="1"/>
</dbReference>
<dbReference type="PRINTS" id="PR01040">
    <property type="entry name" value="TRNASYNTHTYR"/>
</dbReference>
<dbReference type="SMART" id="SM00363">
    <property type="entry name" value="S4"/>
    <property type="match status" value="1"/>
</dbReference>
<dbReference type="SUPFAM" id="SSF55174">
    <property type="entry name" value="Alpha-L RNA-binding motif"/>
    <property type="match status" value="1"/>
</dbReference>
<dbReference type="SUPFAM" id="SSF52374">
    <property type="entry name" value="Nucleotidylyl transferase"/>
    <property type="match status" value="1"/>
</dbReference>
<dbReference type="PROSITE" id="PS00178">
    <property type="entry name" value="AA_TRNA_LIGASE_I"/>
    <property type="match status" value="1"/>
</dbReference>
<dbReference type="PROSITE" id="PS50889">
    <property type="entry name" value="S4"/>
    <property type="match status" value="1"/>
</dbReference>
<organism>
    <name type="scientific">Streptococcus thermophilus (strain ATCC BAA-250 / LMG 18311)</name>
    <dbReference type="NCBI Taxonomy" id="264199"/>
    <lineage>
        <taxon>Bacteria</taxon>
        <taxon>Bacillati</taxon>
        <taxon>Bacillota</taxon>
        <taxon>Bacilli</taxon>
        <taxon>Lactobacillales</taxon>
        <taxon>Streptococcaceae</taxon>
        <taxon>Streptococcus</taxon>
    </lineage>
</organism>
<accession>Q5M2F3</accession>
<feature type="chain" id="PRO_0000234795" description="Tyrosine--tRNA ligase 1">
    <location>
        <begin position="1"/>
        <end position="418"/>
    </location>
</feature>
<feature type="domain" description="S4 RNA-binding" evidence="1">
    <location>
        <begin position="352"/>
        <end position="418"/>
    </location>
</feature>
<feature type="short sequence motif" description="'HIGH' region">
    <location>
        <begin position="39"/>
        <end position="48"/>
    </location>
</feature>
<feature type="short sequence motif" description="'KMSKS' region">
    <location>
        <begin position="229"/>
        <end position="233"/>
    </location>
</feature>
<feature type="binding site" evidence="1">
    <location>
        <position position="34"/>
    </location>
    <ligand>
        <name>L-tyrosine</name>
        <dbReference type="ChEBI" id="CHEBI:58315"/>
    </ligand>
</feature>
<feature type="binding site" evidence="1">
    <location>
        <position position="169"/>
    </location>
    <ligand>
        <name>L-tyrosine</name>
        <dbReference type="ChEBI" id="CHEBI:58315"/>
    </ligand>
</feature>
<feature type="binding site" evidence="1">
    <location>
        <position position="173"/>
    </location>
    <ligand>
        <name>L-tyrosine</name>
        <dbReference type="ChEBI" id="CHEBI:58315"/>
    </ligand>
</feature>
<feature type="binding site" evidence="1">
    <location>
        <position position="232"/>
    </location>
    <ligand>
        <name>ATP</name>
        <dbReference type="ChEBI" id="CHEBI:30616"/>
    </ligand>
</feature>
<evidence type="ECO:0000255" key="1">
    <source>
        <dbReference type="HAMAP-Rule" id="MF_02006"/>
    </source>
</evidence>
<evidence type="ECO:0000305" key="2"/>
<keyword id="KW-0030">Aminoacyl-tRNA synthetase</keyword>
<keyword id="KW-0067">ATP-binding</keyword>
<keyword id="KW-0963">Cytoplasm</keyword>
<keyword id="KW-0436">Ligase</keyword>
<keyword id="KW-0547">Nucleotide-binding</keyword>
<keyword id="KW-0648">Protein biosynthesis</keyword>
<keyword id="KW-1185">Reference proteome</keyword>
<keyword id="KW-0694">RNA-binding</keyword>
<name>SYY1_STRT2</name>
<sequence length="418" mass="47225">MTIFEELKARGLIFQTTDEEALVKAFEEGPVSFYTGYDPTADSLHLGHLVAILTSRRLQLAGHKPYALVGGATGLIGDPSFKDAERSLQTKETVEGWVEKIQGQLSRFLDFENGDNKAVMVNNYDWFGSVSFIDFLRDVGKYFTVNYMMSKESVKKRIETGISYTEFAYQIMQGYDFYELNAKYGVTLQIGGSDQWGNMTAGTELLRRKADKSGHVITVPLITDSTGKKFGKSEGNAVWLDATKTTPYEMYQFWLNVMDDDAVRFLKIFTFLSLEEIEEIGKEFDQARHQRLAQKVLAREVVTLVHGKEAYEQAVHITEQLFAGNLKALSARDLKVALNGVPTYEISADENLNIVELLVNAKISPSKRQAREDVQNGAIYINGERVQDLDYTLSDTDKIDNEITVIRRGKKKNFVLTY</sequence>
<reference key="1">
    <citation type="journal article" date="2004" name="Nat. Biotechnol.">
        <title>Complete sequence and comparative genome analysis of the dairy bacterium Streptococcus thermophilus.</title>
        <authorList>
            <person name="Bolotin A."/>
            <person name="Quinquis B."/>
            <person name="Renault P."/>
            <person name="Sorokin A."/>
            <person name="Ehrlich S.D."/>
            <person name="Kulakauskas S."/>
            <person name="Lapidus A."/>
            <person name="Goltsman E."/>
            <person name="Mazur M."/>
            <person name="Pusch G.D."/>
            <person name="Fonstein M."/>
            <person name="Overbeek R."/>
            <person name="Kyprides N."/>
            <person name="Purnelle B."/>
            <person name="Prozzi D."/>
            <person name="Ngui K."/>
            <person name="Masuy D."/>
            <person name="Hancy F."/>
            <person name="Burteau S."/>
            <person name="Boutry M."/>
            <person name="Delcour J."/>
            <person name="Goffeau A."/>
            <person name="Hols P."/>
        </authorList>
    </citation>
    <scope>NUCLEOTIDE SEQUENCE [LARGE SCALE GENOMIC DNA]</scope>
    <source>
        <strain>ATCC BAA-250 / LMG 18311</strain>
    </source>
</reference>
<proteinExistence type="inferred from homology"/>
<comment type="function">
    <text evidence="1">Catalyzes the attachment of tyrosine to tRNA(Tyr) in a two-step reaction: tyrosine is first activated by ATP to form Tyr-AMP and then transferred to the acceptor end of tRNA(Tyr).</text>
</comment>
<comment type="catalytic activity">
    <reaction evidence="1">
        <text>tRNA(Tyr) + L-tyrosine + ATP = L-tyrosyl-tRNA(Tyr) + AMP + diphosphate + H(+)</text>
        <dbReference type="Rhea" id="RHEA:10220"/>
        <dbReference type="Rhea" id="RHEA-COMP:9706"/>
        <dbReference type="Rhea" id="RHEA-COMP:9707"/>
        <dbReference type="ChEBI" id="CHEBI:15378"/>
        <dbReference type="ChEBI" id="CHEBI:30616"/>
        <dbReference type="ChEBI" id="CHEBI:33019"/>
        <dbReference type="ChEBI" id="CHEBI:58315"/>
        <dbReference type="ChEBI" id="CHEBI:78442"/>
        <dbReference type="ChEBI" id="CHEBI:78536"/>
        <dbReference type="ChEBI" id="CHEBI:456215"/>
        <dbReference type="EC" id="6.1.1.1"/>
    </reaction>
</comment>
<comment type="subunit">
    <text evidence="1">Homodimer.</text>
</comment>
<comment type="subcellular location">
    <subcellularLocation>
        <location evidence="1">Cytoplasm</location>
    </subcellularLocation>
</comment>
<comment type="similarity">
    <text evidence="1">Belongs to the class-I aminoacyl-tRNA synthetase family. TyrS type 1 subfamily.</text>
</comment>
<comment type="sequence caution" evidence="2">
    <conflict type="erroneous initiation">
        <sequence resource="EMBL-CDS" id="AAV61469"/>
    </conflict>
</comment>
<gene>
    <name evidence="1" type="primary">tyrS1</name>
    <name type="ordered locus">stu1870</name>
</gene>